<protein>
    <recommendedName>
        <fullName>Tubulin alpha chain</fullName>
        <ecNumber evidence="2">3.6.5.-</ecNumber>
    </recommendedName>
    <component>
        <recommendedName>
            <fullName>Detyrosinated tubulin alpha chain</fullName>
        </recommendedName>
    </component>
</protein>
<accession>Q28IX8</accession>
<name>TBA_XENTR</name>
<evidence type="ECO:0000250" key="1">
    <source>
        <dbReference type="UniProtKB" id="P41351"/>
    </source>
</evidence>
<evidence type="ECO:0000250" key="2">
    <source>
        <dbReference type="UniProtKB" id="P68363"/>
    </source>
</evidence>
<evidence type="ECO:0000250" key="3">
    <source>
        <dbReference type="UniProtKB" id="P68369"/>
    </source>
</evidence>
<evidence type="ECO:0000250" key="4">
    <source>
        <dbReference type="UniProtKB" id="Q71U36"/>
    </source>
</evidence>
<evidence type="ECO:0000305" key="5"/>
<proteinExistence type="evidence at transcript level"/>
<sequence length="449" mass="50004">MRECISVHVGQAGVQMGNACWELYCLEHGIQPDGQMPSDKTIGGGDDSFTTFFSETGAGKHVPRAVFVDLEPTVIDEVRAGTYRQLFHPEQLITGKEDAANNYARGHYTIGKEIIDPVLDRIRKLADQCTGLQGFLVFHSFGGGTGSGFTSLLMERLSVDYGKKSKLEFSIYPAPQVSTAVVEPYNSILTTHTTLEHSDCAFMVDNEAIYDICRRNLDIERPTYTNLNRLISQIVSSITASLRFDGALNVDLTEFQTNLVPYPRIHFPLATYAPVISAEKAYHEQLSVSEITNACFEPANQMVKCDPRHGKYMACCLLYRGDVVPKDVNAAIAAIKTKRTIQFVDWCPTGFKVGINYQPPTAVPGGDLAKVQRAVCMLSNTTAIAEAWARLDHKFDLMYAKRAFVHWYVGEGMEEGEFSEAREDMAALEKDYEEVGIDSYEDEDEGEEY</sequence>
<organism>
    <name type="scientific">Xenopus tropicalis</name>
    <name type="common">Western clawed frog</name>
    <name type="synonym">Silurana tropicalis</name>
    <dbReference type="NCBI Taxonomy" id="8364"/>
    <lineage>
        <taxon>Eukaryota</taxon>
        <taxon>Metazoa</taxon>
        <taxon>Chordata</taxon>
        <taxon>Craniata</taxon>
        <taxon>Vertebrata</taxon>
        <taxon>Euteleostomi</taxon>
        <taxon>Amphibia</taxon>
        <taxon>Batrachia</taxon>
        <taxon>Anura</taxon>
        <taxon>Pipoidea</taxon>
        <taxon>Pipidae</taxon>
        <taxon>Xenopodinae</taxon>
        <taxon>Xenopus</taxon>
        <taxon>Silurana</taxon>
    </lineage>
</organism>
<feature type="chain" id="PRO_0000260088" description="Tubulin alpha chain">
    <location>
        <begin position="1"/>
        <end position="449"/>
    </location>
</feature>
<feature type="chain" id="PRO_0000437411" description="Detyrosinated tubulin alpha chain" evidence="4">
    <location>
        <begin position="1"/>
        <end position="448"/>
    </location>
</feature>
<feature type="short sequence motif" description="MREC motif" evidence="2">
    <location>
        <begin position="1"/>
        <end position="4"/>
    </location>
</feature>
<feature type="active site" evidence="2">
    <location>
        <position position="254"/>
    </location>
</feature>
<feature type="binding site" evidence="2">
    <location>
        <position position="11"/>
    </location>
    <ligand>
        <name>GTP</name>
        <dbReference type="ChEBI" id="CHEBI:37565"/>
    </ligand>
</feature>
<feature type="binding site" evidence="2">
    <location>
        <position position="71"/>
    </location>
    <ligand>
        <name>GTP</name>
        <dbReference type="ChEBI" id="CHEBI:37565"/>
    </ligand>
</feature>
<feature type="binding site" evidence="2">
    <location>
        <position position="71"/>
    </location>
    <ligand>
        <name>Mg(2+)</name>
        <dbReference type="ChEBI" id="CHEBI:18420"/>
    </ligand>
</feature>
<feature type="binding site" evidence="2">
    <location>
        <position position="140"/>
    </location>
    <ligand>
        <name>GTP</name>
        <dbReference type="ChEBI" id="CHEBI:37565"/>
    </ligand>
</feature>
<feature type="binding site" evidence="2">
    <location>
        <position position="144"/>
    </location>
    <ligand>
        <name>GTP</name>
        <dbReference type="ChEBI" id="CHEBI:37565"/>
    </ligand>
</feature>
<feature type="binding site" evidence="2">
    <location>
        <position position="145"/>
    </location>
    <ligand>
        <name>GTP</name>
        <dbReference type="ChEBI" id="CHEBI:37565"/>
    </ligand>
</feature>
<feature type="binding site" evidence="2">
    <location>
        <position position="179"/>
    </location>
    <ligand>
        <name>GTP</name>
        <dbReference type="ChEBI" id="CHEBI:37565"/>
    </ligand>
</feature>
<feature type="binding site" evidence="2">
    <location>
        <position position="206"/>
    </location>
    <ligand>
        <name>GTP</name>
        <dbReference type="ChEBI" id="CHEBI:37565"/>
    </ligand>
</feature>
<feature type="binding site" evidence="2">
    <location>
        <position position="228"/>
    </location>
    <ligand>
        <name>GTP</name>
        <dbReference type="ChEBI" id="CHEBI:37565"/>
    </ligand>
</feature>
<feature type="site" description="Involved in polymerization">
    <location>
        <position position="449"/>
    </location>
</feature>
<feature type="modified residue" description="N6-acetyllysine" evidence="1 4">
    <location>
        <position position="40"/>
    </location>
</feature>
<feature type="modified residue" description="5-glutamyl polyglutamate" evidence="3">
    <location>
        <position position="443"/>
    </location>
</feature>
<gene>
    <name type="primary">tuba</name>
    <name type="synonym">tuba1</name>
    <name type="ORF">TNeu063j16.1</name>
</gene>
<dbReference type="EC" id="3.6.5.-" evidence="2"/>
<dbReference type="EMBL" id="CR760170">
    <property type="protein sequence ID" value="CAJ82880.1"/>
    <property type="molecule type" value="mRNA"/>
</dbReference>
<dbReference type="RefSeq" id="NP_001016694.1">
    <property type="nucleotide sequence ID" value="NM_001016694.2"/>
</dbReference>
<dbReference type="SMR" id="Q28IX8"/>
<dbReference type="FunCoup" id="Q28IX8">
    <property type="interactions" value="2413"/>
</dbReference>
<dbReference type="STRING" id="8364.ENSXETP00000025793"/>
<dbReference type="PaxDb" id="8364-ENSXETP00000041789"/>
<dbReference type="GeneID" id="549448"/>
<dbReference type="KEGG" id="xtr:549448"/>
<dbReference type="AGR" id="Xenbase:XB-GENE-489927"/>
<dbReference type="CTD" id="80086"/>
<dbReference type="Xenbase" id="XB-GENE-489927">
    <property type="gene designation" value="tuba4b"/>
</dbReference>
<dbReference type="eggNOG" id="KOG1376">
    <property type="taxonomic scope" value="Eukaryota"/>
</dbReference>
<dbReference type="HOGENOM" id="CLU_015718_0_0_1"/>
<dbReference type="InParanoid" id="Q28IX8"/>
<dbReference type="OrthoDB" id="1844at2759"/>
<dbReference type="TreeFam" id="TF300314"/>
<dbReference type="Reactome" id="R-XTR-114608">
    <property type="pathway name" value="Platelet degranulation"/>
</dbReference>
<dbReference type="Reactome" id="R-XTR-190840">
    <property type="pathway name" value="Microtubule-dependent trafficking of connexons from Golgi to the plasma membrane"/>
</dbReference>
<dbReference type="Reactome" id="R-XTR-2467813">
    <property type="pathway name" value="Separation of Sister Chromatids"/>
</dbReference>
<dbReference type="Reactome" id="R-XTR-2500257">
    <property type="pathway name" value="Resolution of Sister Chromatid Cohesion"/>
</dbReference>
<dbReference type="Reactome" id="R-XTR-2565942">
    <property type="pathway name" value="Regulation of PLK1 Activity at G2/M Transition"/>
</dbReference>
<dbReference type="Reactome" id="R-XTR-380259">
    <property type="pathway name" value="Loss of Nlp from mitotic centrosomes"/>
</dbReference>
<dbReference type="Reactome" id="R-XTR-380270">
    <property type="pathway name" value="Recruitment of mitotic centrosome proteins and complexes"/>
</dbReference>
<dbReference type="Reactome" id="R-XTR-380320">
    <property type="pathway name" value="Recruitment of NuMA to mitotic centrosomes"/>
</dbReference>
<dbReference type="Reactome" id="R-XTR-437239">
    <property type="pathway name" value="Recycling pathway of L1"/>
</dbReference>
<dbReference type="Reactome" id="R-XTR-5617833">
    <property type="pathway name" value="Cilium Assembly"/>
</dbReference>
<dbReference type="Reactome" id="R-XTR-5620912">
    <property type="pathway name" value="Anchoring of the basal body to the plasma membrane"/>
</dbReference>
<dbReference type="Reactome" id="R-XTR-5663220">
    <property type="pathway name" value="RHO GTPases Activate Formins"/>
</dbReference>
<dbReference type="Reactome" id="R-XTR-6807878">
    <property type="pathway name" value="COPI-mediated anterograde transport"/>
</dbReference>
<dbReference type="Reactome" id="R-XTR-6811434">
    <property type="pathway name" value="COPI-dependent Golgi-to-ER retrograde traffic"/>
</dbReference>
<dbReference type="Reactome" id="R-XTR-68877">
    <property type="pathway name" value="Mitotic Prometaphase"/>
</dbReference>
<dbReference type="Reactome" id="R-XTR-8852276">
    <property type="pathway name" value="The role of GTSE1 in G2/M progression after G2 checkpoint"/>
</dbReference>
<dbReference type="Reactome" id="R-XTR-8854518">
    <property type="pathway name" value="AURKA Activation by TPX2"/>
</dbReference>
<dbReference type="Reactome" id="R-XTR-8955332">
    <property type="pathway name" value="Carboxyterminal post-translational modifications of tubulin"/>
</dbReference>
<dbReference type="Reactome" id="R-XTR-9646399">
    <property type="pathway name" value="Aggrephagy"/>
</dbReference>
<dbReference type="Reactome" id="R-XTR-9648025">
    <property type="pathway name" value="EML4 and NUDC in mitotic spindle formation"/>
</dbReference>
<dbReference type="Reactome" id="R-XTR-9668328">
    <property type="pathway name" value="Sealing of the nuclear envelope (NE) by ESCRT-III"/>
</dbReference>
<dbReference type="Reactome" id="R-XTR-983189">
    <property type="pathway name" value="Kinesins"/>
</dbReference>
<dbReference type="Proteomes" id="UP000008143">
    <property type="component" value="Chromosome 9"/>
</dbReference>
<dbReference type="GO" id="GO:0005737">
    <property type="term" value="C:cytoplasm"/>
    <property type="evidence" value="ECO:0007669"/>
    <property type="project" value="UniProtKB-KW"/>
</dbReference>
<dbReference type="GO" id="GO:0005874">
    <property type="term" value="C:microtubule"/>
    <property type="evidence" value="ECO:0007669"/>
    <property type="project" value="UniProtKB-KW"/>
</dbReference>
<dbReference type="GO" id="GO:0005525">
    <property type="term" value="F:GTP binding"/>
    <property type="evidence" value="ECO:0007669"/>
    <property type="project" value="UniProtKB-KW"/>
</dbReference>
<dbReference type="GO" id="GO:0016787">
    <property type="term" value="F:hydrolase activity"/>
    <property type="evidence" value="ECO:0007669"/>
    <property type="project" value="UniProtKB-KW"/>
</dbReference>
<dbReference type="GO" id="GO:0046872">
    <property type="term" value="F:metal ion binding"/>
    <property type="evidence" value="ECO:0007669"/>
    <property type="project" value="UniProtKB-KW"/>
</dbReference>
<dbReference type="GO" id="GO:0005200">
    <property type="term" value="F:structural constituent of cytoskeleton"/>
    <property type="evidence" value="ECO:0007669"/>
    <property type="project" value="InterPro"/>
</dbReference>
<dbReference type="GO" id="GO:0007017">
    <property type="term" value="P:microtubule-based process"/>
    <property type="evidence" value="ECO:0007669"/>
    <property type="project" value="InterPro"/>
</dbReference>
<dbReference type="CDD" id="cd02186">
    <property type="entry name" value="alpha_tubulin"/>
    <property type="match status" value="1"/>
</dbReference>
<dbReference type="FunFam" id="1.10.287.600:FF:000005">
    <property type="entry name" value="Tubulin alpha chain"/>
    <property type="match status" value="1"/>
</dbReference>
<dbReference type="FunFam" id="3.30.1330.20:FF:000001">
    <property type="entry name" value="Tubulin alpha chain"/>
    <property type="match status" value="1"/>
</dbReference>
<dbReference type="FunFam" id="3.40.50.1440:FF:000002">
    <property type="entry name" value="Tubulin alpha chain"/>
    <property type="match status" value="1"/>
</dbReference>
<dbReference type="Gene3D" id="1.10.287.600">
    <property type="entry name" value="Helix hairpin bin"/>
    <property type="match status" value="1"/>
</dbReference>
<dbReference type="Gene3D" id="3.30.1330.20">
    <property type="entry name" value="Tubulin/FtsZ, C-terminal domain"/>
    <property type="match status" value="1"/>
</dbReference>
<dbReference type="Gene3D" id="3.40.50.1440">
    <property type="entry name" value="Tubulin/FtsZ, GTPase domain"/>
    <property type="match status" value="1"/>
</dbReference>
<dbReference type="InterPro" id="IPR002452">
    <property type="entry name" value="Alpha_tubulin"/>
</dbReference>
<dbReference type="InterPro" id="IPR008280">
    <property type="entry name" value="Tub_FtsZ_C"/>
</dbReference>
<dbReference type="InterPro" id="IPR000217">
    <property type="entry name" value="Tubulin"/>
</dbReference>
<dbReference type="InterPro" id="IPR037103">
    <property type="entry name" value="Tubulin/FtsZ-like_C"/>
</dbReference>
<dbReference type="InterPro" id="IPR018316">
    <property type="entry name" value="Tubulin/FtsZ_2-layer-sand-dom"/>
</dbReference>
<dbReference type="InterPro" id="IPR036525">
    <property type="entry name" value="Tubulin/FtsZ_GTPase_sf"/>
</dbReference>
<dbReference type="InterPro" id="IPR023123">
    <property type="entry name" value="Tubulin_C"/>
</dbReference>
<dbReference type="InterPro" id="IPR017975">
    <property type="entry name" value="Tubulin_CS"/>
</dbReference>
<dbReference type="InterPro" id="IPR003008">
    <property type="entry name" value="Tubulin_FtsZ_GTPase"/>
</dbReference>
<dbReference type="PANTHER" id="PTHR11588">
    <property type="entry name" value="TUBULIN"/>
    <property type="match status" value="1"/>
</dbReference>
<dbReference type="Pfam" id="PF00091">
    <property type="entry name" value="Tubulin"/>
    <property type="match status" value="1"/>
</dbReference>
<dbReference type="Pfam" id="PF03953">
    <property type="entry name" value="Tubulin_C"/>
    <property type="match status" value="1"/>
</dbReference>
<dbReference type="PRINTS" id="PR01162">
    <property type="entry name" value="ALPHATUBULIN"/>
</dbReference>
<dbReference type="PRINTS" id="PR01161">
    <property type="entry name" value="TUBULIN"/>
</dbReference>
<dbReference type="SMART" id="SM00864">
    <property type="entry name" value="Tubulin"/>
    <property type="match status" value="1"/>
</dbReference>
<dbReference type="SMART" id="SM00865">
    <property type="entry name" value="Tubulin_C"/>
    <property type="match status" value="1"/>
</dbReference>
<dbReference type="SUPFAM" id="SSF55307">
    <property type="entry name" value="Tubulin C-terminal domain-like"/>
    <property type="match status" value="1"/>
</dbReference>
<dbReference type="SUPFAM" id="SSF52490">
    <property type="entry name" value="Tubulin nucleotide-binding domain-like"/>
    <property type="match status" value="1"/>
</dbReference>
<dbReference type="PROSITE" id="PS00227">
    <property type="entry name" value="TUBULIN"/>
    <property type="match status" value="1"/>
</dbReference>
<reference key="1">
    <citation type="submission" date="2006-10" db="EMBL/GenBank/DDBJ databases">
        <authorList>
            <consortium name="Sanger Xenopus tropicalis EST/cDNA project"/>
        </authorList>
    </citation>
    <scope>NUCLEOTIDE SEQUENCE [LARGE SCALE MRNA]</scope>
    <source>
        <tissue>Neurula</tissue>
    </source>
</reference>
<comment type="function">
    <text>Tubulin is the major constituent of microtubules, a cylinder consisting of laterally associated linear protofilaments composed of alpha- and beta-tubulin heterodimers. Microtubules grow by the addition of GTP-tubulin dimers to the microtubule end, where a stabilizing cap forms. Below the cap, tubulin dimers are in GDP-bound state, owing to GTPase activity of alpha-tubulin.</text>
</comment>
<comment type="catalytic activity">
    <reaction evidence="2">
        <text>GTP + H2O = GDP + phosphate + H(+)</text>
        <dbReference type="Rhea" id="RHEA:19669"/>
        <dbReference type="ChEBI" id="CHEBI:15377"/>
        <dbReference type="ChEBI" id="CHEBI:15378"/>
        <dbReference type="ChEBI" id="CHEBI:37565"/>
        <dbReference type="ChEBI" id="CHEBI:43474"/>
        <dbReference type="ChEBI" id="CHEBI:58189"/>
    </reaction>
    <physiologicalReaction direction="left-to-right" evidence="2">
        <dbReference type="Rhea" id="RHEA:19670"/>
    </physiologicalReaction>
</comment>
<comment type="cofactor">
    <cofactor evidence="2">
        <name>Mg(2+)</name>
        <dbReference type="ChEBI" id="CHEBI:18420"/>
    </cofactor>
</comment>
<comment type="subunit">
    <text>Dimer of alpha and beta chains. A typical microtubule is a hollow water-filled tube with an outer diameter of 25 nm and an inner diameter of 15 nM. Alpha-beta heterodimers associate head-to-tail to form protofilaments running lengthwise along the microtubule wall with the beta-tubulin subunit facing the microtubule plus end conferring a structural polarity. Microtubules usually have 13 protofilaments but different protofilament numbers can be found in some organisms and specialized cells.</text>
</comment>
<comment type="subcellular location">
    <subcellularLocation>
        <location>Cytoplasm</location>
        <location>Cytoskeleton</location>
    </subcellularLocation>
</comment>
<comment type="domain">
    <text evidence="2">The MREC motif may be critical for tubulin autoregulation.</text>
</comment>
<comment type="PTM">
    <text evidence="3">Some glutamate residues at the C-terminus are polyglycylated, resulting in polyglycine chains on the gamma-carboxyl group. Glycylation is mainly limited to tubulin incorporated into axonemes (cilia and flagella) whereas glutamylation is prevalent in neuronal cells, centrioles, axonemes, and the mitotic spindle. Both modifications can coexist on the same protein on adjacent residues, and lowering polyglycylation levels increases polyglutamylation, and reciprocally. The precise function of polyglycylation is still unclear.</text>
</comment>
<comment type="PTM">
    <text evidence="3 4">Some glutamate residues at the C-terminus are polyglutamylated, resulting in polyglutamate chains on the gamma-carboxyl group (By similarity). Polyglutamylation plays a key role in microtubule severing by spastin (SPAST). SPAST preferentially recognizes and acts on microtubules decorated with short polyglutamate tails: severing activity by SPAST increases as the number of glutamates per tubulin rises from one to eight, but decreases beyond this glutamylation threshold (By similarity).</text>
</comment>
<comment type="PTM">
    <text evidence="4">Acetylation of alpha chains at Lys-40 is located inside the microtubule lumen. This modification has been correlated with increased microtubule stability, intracellular transport and ciliary assembly.</text>
</comment>
<comment type="PTM">
    <text evidence="3 4">Undergoes a tyrosination/detyrosination cycle, the cyclic removal and re-addition of a C-terminal tyrosine residue by the enzymes tubulin tyrosine carboxypeptidase (MATCAP1, VASH1 or VASH2) and tubulin tyrosine ligase (TTL), respectively.</text>
</comment>
<comment type="PTM">
    <molecule>Tubulin alpha chain</molecule>
    <text evidence="3 4">Tyrosination promotes microtubule interaction with CAP-Gly microtubule plus-end tracking proteins. Tyrosinated tubulins regulate the initiation of dynein-driven motility.</text>
</comment>
<comment type="PTM">
    <molecule>Detyrosinated tubulin alpha chain</molecule>
    <text evidence="3 4">Detyrosination is involved in metaphase plate congression by guiding chromosomes during mitosis (By similarity). Detyrosination increases microtubules-dependent mechanotransduction in dystrophic cardiac and skeletal muscle. In cardiomyocytes, detyrosinated microtubules are required to resist to contractile compression during contraction (By similarity).</text>
</comment>
<comment type="similarity">
    <text evidence="5">Belongs to the tubulin family.</text>
</comment>
<keyword id="KW-0007">Acetylation</keyword>
<keyword id="KW-0963">Cytoplasm</keyword>
<keyword id="KW-0206">Cytoskeleton</keyword>
<keyword id="KW-0342">GTP-binding</keyword>
<keyword id="KW-0378">Hydrolase</keyword>
<keyword id="KW-1017">Isopeptide bond</keyword>
<keyword id="KW-0460">Magnesium</keyword>
<keyword id="KW-0479">Metal-binding</keyword>
<keyword id="KW-0493">Microtubule</keyword>
<keyword id="KW-0547">Nucleotide-binding</keyword>
<keyword id="KW-1185">Reference proteome</keyword>